<accession>Q6ZMY9</accession>
<comment type="function">
    <text>May be involved in transcriptional regulation.</text>
</comment>
<comment type="subcellular location">
    <subcellularLocation>
        <location evidence="4">Nucleus</location>
    </subcellularLocation>
</comment>
<comment type="similarity">
    <text evidence="4">Belongs to the krueppel C2H2-type zinc-finger protein family.</text>
</comment>
<name>ZN517_HUMAN</name>
<reference key="1">
    <citation type="journal article" date="2004" name="Nat. Genet.">
        <title>Complete sequencing and characterization of 21,243 full-length human cDNAs.</title>
        <authorList>
            <person name="Ota T."/>
            <person name="Suzuki Y."/>
            <person name="Nishikawa T."/>
            <person name="Otsuki T."/>
            <person name="Sugiyama T."/>
            <person name="Irie R."/>
            <person name="Wakamatsu A."/>
            <person name="Hayashi K."/>
            <person name="Sato H."/>
            <person name="Nagai K."/>
            <person name="Kimura K."/>
            <person name="Makita H."/>
            <person name="Sekine M."/>
            <person name="Obayashi M."/>
            <person name="Nishi T."/>
            <person name="Shibahara T."/>
            <person name="Tanaka T."/>
            <person name="Ishii S."/>
            <person name="Yamamoto J."/>
            <person name="Saito K."/>
            <person name="Kawai Y."/>
            <person name="Isono Y."/>
            <person name="Nakamura Y."/>
            <person name="Nagahari K."/>
            <person name="Murakami K."/>
            <person name="Yasuda T."/>
            <person name="Iwayanagi T."/>
            <person name="Wagatsuma M."/>
            <person name="Shiratori A."/>
            <person name="Sudo H."/>
            <person name="Hosoiri T."/>
            <person name="Kaku Y."/>
            <person name="Kodaira H."/>
            <person name="Kondo H."/>
            <person name="Sugawara M."/>
            <person name="Takahashi M."/>
            <person name="Kanda K."/>
            <person name="Yokoi T."/>
            <person name="Furuya T."/>
            <person name="Kikkawa E."/>
            <person name="Omura Y."/>
            <person name="Abe K."/>
            <person name="Kamihara K."/>
            <person name="Katsuta N."/>
            <person name="Sato K."/>
            <person name="Tanikawa M."/>
            <person name="Yamazaki M."/>
            <person name="Ninomiya K."/>
            <person name="Ishibashi T."/>
            <person name="Yamashita H."/>
            <person name="Murakawa K."/>
            <person name="Fujimori K."/>
            <person name="Tanai H."/>
            <person name="Kimata M."/>
            <person name="Watanabe M."/>
            <person name="Hiraoka S."/>
            <person name="Chiba Y."/>
            <person name="Ishida S."/>
            <person name="Ono Y."/>
            <person name="Takiguchi S."/>
            <person name="Watanabe S."/>
            <person name="Yosida M."/>
            <person name="Hotuta T."/>
            <person name="Kusano J."/>
            <person name="Kanehori K."/>
            <person name="Takahashi-Fujii A."/>
            <person name="Hara H."/>
            <person name="Tanase T.-O."/>
            <person name="Nomura Y."/>
            <person name="Togiya S."/>
            <person name="Komai F."/>
            <person name="Hara R."/>
            <person name="Takeuchi K."/>
            <person name="Arita M."/>
            <person name="Imose N."/>
            <person name="Musashino K."/>
            <person name="Yuuki H."/>
            <person name="Oshima A."/>
            <person name="Sasaki N."/>
            <person name="Aotsuka S."/>
            <person name="Yoshikawa Y."/>
            <person name="Matsunawa H."/>
            <person name="Ichihara T."/>
            <person name="Shiohata N."/>
            <person name="Sano S."/>
            <person name="Moriya S."/>
            <person name="Momiyama H."/>
            <person name="Satoh N."/>
            <person name="Takami S."/>
            <person name="Terashima Y."/>
            <person name="Suzuki O."/>
            <person name="Nakagawa S."/>
            <person name="Senoh A."/>
            <person name="Mizoguchi H."/>
            <person name="Goto Y."/>
            <person name="Shimizu F."/>
            <person name="Wakebe H."/>
            <person name="Hishigaki H."/>
            <person name="Watanabe T."/>
            <person name="Sugiyama A."/>
            <person name="Takemoto M."/>
            <person name="Kawakami B."/>
            <person name="Yamazaki M."/>
            <person name="Watanabe K."/>
            <person name="Kumagai A."/>
            <person name="Itakura S."/>
            <person name="Fukuzumi Y."/>
            <person name="Fujimori Y."/>
            <person name="Komiyama M."/>
            <person name="Tashiro H."/>
            <person name="Tanigami A."/>
            <person name="Fujiwara T."/>
            <person name="Ono T."/>
            <person name="Yamada K."/>
            <person name="Fujii Y."/>
            <person name="Ozaki K."/>
            <person name="Hirao M."/>
            <person name="Ohmori Y."/>
            <person name="Kawabata A."/>
            <person name="Hikiji T."/>
            <person name="Kobatake N."/>
            <person name="Inagaki H."/>
            <person name="Ikema Y."/>
            <person name="Okamoto S."/>
            <person name="Okitani R."/>
            <person name="Kawakami T."/>
            <person name="Noguchi S."/>
            <person name="Itoh T."/>
            <person name="Shigeta K."/>
            <person name="Senba T."/>
            <person name="Matsumura K."/>
            <person name="Nakajima Y."/>
            <person name="Mizuno T."/>
            <person name="Morinaga M."/>
            <person name="Sasaki M."/>
            <person name="Togashi T."/>
            <person name="Oyama M."/>
            <person name="Hata H."/>
            <person name="Watanabe M."/>
            <person name="Komatsu T."/>
            <person name="Mizushima-Sugano J."/>
            <person name="Satoh T."/>
            <person name="Shirai Y."/>
            <person name="Takahashi Y."/>
            <person name="Nakagawa K."/>
            <person name="Okumura K."/>
            <person name="Nagase T."/>
            <person name="Nomura N."/>
            <person name="Kikuchi H."/>
            <person name="Masuho Y."/>
            <person name="Yamashita R."/>
            <person name="Nakai K."/>
            <person name="Yada T."/>
            <person name="Nakamura Y."/>
            <person name="Ohara O."/>
            <person name="Isogai T."/>
            <person name="Sugano S."/>
        </authorList>
    </citation>
    <scope>NUCLEOTIDE SEQUENCE [LARGE SCALE MRNA]</scope>
    <source>
        <tissue>Esophageal carcinoma</tissue>
    </source>
</reference>
<reference key="2">
    <citation type="journal article" date="2006" name="Nature">
        <title>DNA sequence and analysis of human chromosome 8.</title>
        <authorList>
            <person name="Nusbaum C."/>
            <person name="Mikkelsen T.S."/>
            <person name="Zody M.C."/>
            <person name="Asakawa S."/>
            <person name="Taudien S."/>
            <person name="Garber M."/>
            <person name="Kodira C.D."/>
            <person name="Schueler M.G."/>
            <person name="Shimizu A."/>
            <person name="Whittaker C.A."/>
            <person name="Chang J.L."/>
            <person name="Cuomo C.A."/>
            <person name="Dewar K."/>
            <person name="FitzGerald M.G."/>
            <person name="Yang X."/>
            <person name="Allen N.R."/>
            <person name="Anderson S."/>
            <person name="Asakawa T."/>
            <person name="Blechschmidt K."/>
            <person name="Bloom T."/>
            <person name="Borowsky M.L."/>
            <person name="Butler J."/>
            <person name="Cook A."/>
            <person name="Corum B."/>
            <person name="DeArellano K."/>
            <person name="DeCaprio D."/>
            <person name="Dooley K.T."/>
            <person name="Dorris L. III"/>
            <person name="Engels R."/>
            <person name="Gloeckner G."/>
            <person name="Hafez N."/>
            <person name="Hagopian D.S."/>
            <person name="Hall J.L."/>
            <person name="Ishikawa S.K."/>
            <person name="Jaffe D.B."/>
            <person name="Kamat A."/>
            <person name="Kudoh J."/>
            <person name="Lehmann R."/>
            <person name="Lokitsang T."/>
            <person name="Macdonald P."/>
            <person name="Major J.E."/>
            <person name="Matthews C.D."/>
            <person name="Mauceli E."/>
            <person name="Menzel U."/>
            <person name="Mihalev A.H."/>
            <person name="Minoshima S."/>
            <person name="Murayama Y."/>
            <person name="Naylor J.W."/>
            <person name="Nicol R."/>
            <person name="Nguyen C."/>
            <person name="O'Leary S.B."/>
            <person name="O'Neill K."/>
            <person name="Parker S.C.J."/>
            <person name="Polley A."/>
            <person name="Raymond C.K."/>
            <person name="Reichwald K."/>
            <person name="Rodriguez J."/>
            <person name="Sasaki T."/>
            <person name="Schilhabel M."/>
            <person name="Siddiqui R."/>
            <person name="Smith C.L."/>
            <person name="Sneddon T.P."/>
            <person name="Talamas J.A."/>
            <person name="Tenzin P."/>
            <person name="Topham K."/>
            <person name="Venkataraman V."/>
            <person name="Wen G."/>
            <person name="Yamazaki S."/>
            <person name="Young S.K."/>
            <person name="Zeng Q."/>
            <person name="Zimmer A.R."/>
            <person name="Rosenthal A."/>
            <person name="Birren B.W."/>
            <person name="Platzer M."/>
            <person name="Shimizu N."/>
            <person name="Lander E.S."/>
        </authorList>
    </citation>
    <scope>NUCLEOTIDE SEQUENCE [LARGE SCALE GENOMIC DNA]</scope>
</reference>
<dbReference type="EMBL" id="AK131440">
    <property type="protein sequence ID" value="BAD18586.1"/>
    <property type="molecule type" value="mRNA"/>
</dbReference>
<dbReference type="EMBL" id="AF235103">
    <property type="status" value="NOT_ANNOTATED_CDS"/>
    <property type="molecule type" value="Genomic_DNA"/>
</dbReference>
<dbReference type="CCDS" id="CCDS6434.1"/>
<dbReference type="RefSeq" id="NP_001371833.1">
    <property type="nucleotide sequence ID" value="NM_001384904.1"/>
</dbReference>
<dbReference type="RefSeq" id="NP_001371834.1">
    <property type="nucleotide sequence ID" value="NM_001384905.1"/>
</dbReference>
<dbReference type="RefSeq" id="NP_998770.2">
    <property type="nucleotide sequence ID" value="NM_213605.3"/>
</dbReference>
<dbReference type="RefSeq" id="XP_011515316.1">
    <property type="nucleotide sequence ID" value="XM_011517014.2"/>
</dbReference>
<dbReference type="RefSeq" id="XP_011515317.1">
    <property type="nucleotide sequence ID" value="XM_011517015.2"/>
</dbReference>
<dbReference type="SMR" id="Q6ZMY9"/>
<dbReference type="BioGRID" id="131045">
    <property type="interactions" value="63"/>
</dbReference>
<dbReference type="FunCoup" id="Q6ZMY9">
    <property type="interactions" value="128"/>
</dbReference>
<dbReference type="IntAct" id="Q6ZMY9">
    <property type="interactions" value="27"/>
</dbReference>
<dbReference type="STRING" id="9606.ENSP00000353058"/>
<dbReference type="iPTMnet" id="Q6ZMY9"/>
<dbReference type="PhosphoSitePlus" id="Q6ZMY9"/>
<dbReference type="BioMuta" id="ZNF517"/>
<dbReference type="DMDM" id="296453044"/>
<dbReference type="jPOST" id="Q6ZMY9"/>
<dbReference type="MassIVE" id="Q6ZMY9"/>
<dbReference type="PaxDb" id="9606-ENSP00000353058"/>
<dbReference type="PeptideAtlas" id="Q6ZMY9"/>
<dbReference type="Antibodypedia" id="52855">
    <property type="antibodies" value="77 antibodies from 16 providers"/>
</dbReference>
<dbReference type="DNASU" id="340385"/>
<dbReference type="Ensembl" id="ENST00000359971.4">
    <property type="protein sequence ID" value="ENSP00000353058.3"/>
    <property type="gene ID" value="ENSG00000197363.11"/>
</dbReference>
<dbReference type="Ensembl" id="ENST00000533965.5">
    <property type="protein sequence ID" value="ENSP00000435166.1"/>
    <property type="gene ID" value="ENSG00000197363.11"/>
</dbReference>
<dbReference type="GeneID" id="340385"/>
<dbReference type="KEGG" id="hsa:340385"/>
<dbReference type="MANE-Select" id="ENST00000359971.4">
    <property type="protein sequence ID" value="ENSP00000353058.3"/>
    <property type="RefSeq nucleotide sequence ID" value="NM_213605.3"/>
    <property type="RefSeq protein sequence ID" value="NP_998770.2"/>
</dbReference>
<dbReference type="UCSC" id="uc003zed.1">
    <property type="organism name" value="human"/>
</dbReference>
<dbReference type="AGR" id="HGNC:27984"/>
<dbReference type="CTD" id="340385"/>
<dbReference type="DisGeNET" id="340385"/>
<dbReference type="GeneCards" id="ZNF517"/>
<dbReference type="HGNC" id="HGNC:27984">
    <property type="gene designation" value="ZNF517"/>
</dbReference>
<dbReference type="HPA" id="ENSG00000197363">
    <property type="expression patterns" value="Low tissue specificity"/>
</dbReference>
<dbReference type="neXtProt" id="NX_Q6ZMY9"/>
<dbReference type="OpenTargets" id="ENSG00000197363"/>
<dbReference type="PharmGKB" id="PA134889443"/>
<dbReference type="VEuPathDB" id="HostDB:ENSG00000197363"/>
<dbReference type="eggNOG" id="KOG1721">
    <property type="taxonomic scope" value="Eukaryota"/>
</dbReference>
<dbReference type="GeneTree" id="ENSGT00950000182890"/>
<dbReference type="HOGENOM" id="CLU_002678_44_5_1"/>
<dbReference type="InParanoid" id="Q6ZMY9"/>
<dbReference type="OMA" id="HHRVHTH"/>
<dbReference type="OrthoDB" id="8117402at2759"/>
<dbReference type="PAN-GO" id="Q6ZMY9">
    <property type="GO annotations" value="4 GO annotations based on evolutionary models"/>
</dbReference>
<dbReference type="PhylomeDB" id="Q6ZMY9"/>
<dbReference type="TreeFam" id="TF337055"/>
<dbReference type="PathwayCommons" id="Q6ZMY9"/>
<dbReference type="Reactome" id="R-HSA-212436">
    <property type="pathway name" value="Generic Transcription Pathway"/>
</dbReference>
<dbReference type="SignaLink" id="Q6ZMY9"/>
<dbReference type="BioGRID-ORCS" id="340385">
    <property type="hits" value="14 hits in 1168 CRISPR screens"/>
</dbReference>
<dbReference type="GenomeRNAi" id="340385"/>
<dbReference type="Pharos" id="Q6ZMY9">
    <property type="development level" value="Tdark"/>
</dbReference>
<dbReference type="PRO" id="PR:Q6ZMY9"/>
<dbReference type="Proteomes" id="UP000005640">
    <property type="component" value="Chromosome 8"/>
</dbReference>
<dbReference type="RNAct" id="Q6ZMY9">
    <property type="molecule type" value="protein"/>
</dbReference>
<dbReference type="Bgee" id="ENSG00000197363">
    <property type="expression patterns" value="Expressed in cortical plate and 95 other cell types or tissues"/>
</dbReference>
<dbReference type="ExpressionAtlas" id="Q6ZMY9">
    <property type="expression patterns" value="baseline and differential"/>
</dbReference>
<dbReference type="GO" id="GO:0005634">
    <property type="term" value="C:nucleus"/>
    <property type="evidence" value="ECO:0000318"/>
    <property type="project" value="GO_Central"/>
</dbReference>
<dbReference type="GO" id="GO:0000981">
    <property type="term" value="F:DNA-binding transcription factor activity, RNA polymerase II-specific"/>
    <property type="evidence" value="ECO:0000318"/>
    <property type="project" value="GO_Central"/>
</dbReference>
<dbReference type="GO" id="GO:0000977">
    <property type="term" value="F:RNA polymerase II transcription regulatory region sequence-specific DNA binding"/>
    <property type="evidence" value="ECO:0000318"/>
    <property type="project" value="GO_Central"/>
</dbReference>
<dbReference type="GO" id="GO:0008270">
    <property type="term" value="F:zinc ion binding"/>
    <property type="evidence" value="ECO:0007669"/>
    <property type="project" value="UniProtKB-KW"/>
</dbReference>
<dbReference type="GO" id="GO:0006357">
    <property type="term" value="P:regulation of transcription by RNA polymerase II"/>
    <property type="evidence" value="ECO:0000318"/>
    <property type="project" value="GO_Central"/>
</dbReference>
<dbReference type="CDD" id="cd07765">
    <property type="entry name" value="KRAB_A-box"/>
    <property type="match status" value="1"/>
</dbReference>
<dbReference type="FunFam" id="3.30.160.60:FF:001747">
    <property type="match status" value="1"/>
</dbReference>
<dbReference type="FunFam" id="3.30.160.60:FF:000287">
    <property type="entry name" value="PR domain zinc finger protein 10"/>
    <property type="match status" value="1"/>
</dbReference>
<dbReference type="FunFam" id="3.30.160.60:FF:000295">
    <property type="entry name" value="zinc finger protein 19"/>
    <property type="match status" value="1"/>
</dbReference>
<dbReference type="FunFam" id="3.30.160.60:FF:000822">
    <property type="entry name" value="Zinc finger protein 234, isoform CRA_a"/>
    <property type="match status" value="1"/>
</dbReference>
<dbReference type="FunFam" id="3.30.160.60:FF:000690">
    <property type="entry name" value="Zinc finger protein 354C"/>
    <property type="match status" value="1"/>
</dbReference>
<dbReference type="FunFam" id="3.30.160.60:FF:000016">
    <property type="entry name" value="zinc finger protein 37 homolog"/>
    <property type="match status" value="1"/>
</dbReference>
<dbReference type="FunFam" id="3.30.160.60:FF:002090">
    <property type="entry name" value="Zinc finger protein 473"/>
    <property type="match status" value="1"/>
</dbReference>
<dbReference type="FunFam" id="3.30.160.60:FF:002561">
    <property type="entry name" value="Zinc finger protein 517"/>
    <property type="match status" value="1"/>
</dbReference>
<dbReference type="FunFam" id="3.30.160.60:FF:001504">
    <property type="entry name" value="zinc finger protein 517 isoform X3"/>
    <property type="match status" value="2"/>
</dbReference>
<dbReference type="Gene3D" id="6.10.140.140">
    <property type="match status" value="1"/>
</dbReference>
<dbReference type="Gene3D" id="3.30.160.60">
    <property type="entry name" value="Classic Zinc Finger"/>
    <property type="match status" value="10"/>
</dbReference>
<dbReference type="InterPro" id="IPR050752">
    <property type="entry name" value="C2H2-ZF_domain"/>
</dbReference>
<dbReference type="InterPro" id="IPR001909">
    <property type="entry name" value="KRAB"/>
</dbReference>
<dbReference type="InterPro" id="IPR036051">
    <property type="entry name" value="KRAB_dom_sf"/>
</dbReference>
<dbReference type="InterPro" id="IPR036236">
    <property type="entry name" value="Znf_C2H2_sf"/>
</dbReference>
<dbReference type="InterPro" id="IPR013087">
    <property type="entry name" value="Znf_C2H2_type"/>
</dbReference>
<dbReference type="PANTHER" id="PTHR24384">
    <property type="entry name" value="FINGER PUTATIVE TRANSCRIPTION FACTOR FAMILY-RELATED"/>
    <property type="match status" value="1"/>
</dbReference>
<dbReference type="PANTHER" id="PTHR24384:SF242">
    <property type="entry name" value="ZINC FINGER PROTEIN 628"/>
    <property type="match status" value="1"/>
</dbReference>
<dbReference type="Pfam" id="PF01352">
    <property type="entry name" value="KRAB"/>
    <property type="match status" value="1"/>
</dbReference>
<dbReference type="Pfam" id="PF00096">
    <property type="entry name" value="zf-C2H2"/>
    <property type="match status" value="10"/>
</dbReference>
<dbReference type="SMART" id="SM00349">
    <property type="entry name" value="KRAB"/>
    <property type="match status" value="1"/>
</dbReference>
<dbReference type="SMART" id="SM00355">
    <property type="entry name" value="ZnF_C2H2"/>
    <property type="match status" value="10"/>
</dbReference>
<dbReference type="SUPFAM" id="SSF57667">
    <property type="entry name" value="beta-beta-alpha zinc fingers"/>
    <property type="match status" value="5"/>
</dbReference>
<dbReference type="SUPFAM" id="SSF109640">
    <property type="entry name" value="KRAB domain (Kruppel-associated box)"/>
    <property type="match status" value="1"/>
</dbReference>
<dbReference type="PROSITE" id="PS50805">
    <property type="entry name" value="KRAB"/>
    <property type="match status" value="1"/>
</dbReference>
<dbReference type="PROSITE" id="PS00028">
    <property type="entry name" value="ZINC_FINGER_C2H2_1"/>
    <property type="match status" value="9"/>
</dbReference>
<dbReference type="PROSITE" id="PS50157">
    <property type="entry name" value="ZINC_FINGER_C2H2_2"/>
    <property type="match status" value="10"/>
</dbReference>
<keyword id="KW-0238">DNA-binding</keyword>
<keyword id="KW-0479">Metal-binding</keyword>
<keyword id="KW-0539">Nucleus</keyword>
<keyword id="KW-1267">Proteomics identification</keyword>
<keyword id="KW-1185">Reference proteome</keyword>
<keyword id="KW-0677">Repeat</keyword>
<keyword id="KW-0804">Transcription</keyword>
<keyword id="KW-0805">Transcription regulation</keyword>
<keyword id="KW-0862">Zinc</keyword>
<keyword id="KW-0863">Zinc-finger</keyword>
<feature type="chain" id="PRO_0000047636" description="Zinc finger protein 517">
    <location>
        <begin position="1"/>
        <end position="492"/>
    </location>
</feature>
<feature type="domain" description="KRAB" evidence="2">
    <location>
        <begin position="14"/>
        <end position="85"/>
    </location>
</feature>
<feature type="zinc finger region" description="C2H2-type 1" evidence="1">
    <location>
        <begin position="178"/>
        <end position="199"/>
    </location>
</feature>
<feature type="zinc finger region" description="C2H2-type 2" evidence="1">
    <location>
        <begin position="205"/>
        <end position="227"/>
    </location>
</feature>
<feature type="zinc finger region" description="C2H2-type 3" evidence="1">
    <location>
        <begin position="233"/>
        <end position="255"/>
    </location>
</feature>
<feature type="zinc finger region" description="C2H2-type 4" evidence="1">
    <location>
        <begin position="261"/>
        <end position="283"/>
    </location>
</feature>
<feature type="zinc finger region" description="C2H2-type 5" evidence="1">
    <location>
        <begin position="289"/>
        <end position="311"/>
    </location>
</feature>
<feature type="zinc finger region" description="C2H2-type 6" evidence="1">
    <location>
        <begin position="317"/>
        <end position="339"/>
    </location>
</feature>
<feature type="zinc finger region" description="C2H2-type 7" evidence="1">
    <location>
        <begin position="368"/>
        <end position="390"/>
    </location>
</feature>
<feature type="zinc finger region" description="C2H2-type 8" evidence="1">
    <location>
        <begin position="396"/>
        <end position="418"/>
    </location>
</feature>
<feature type="zinc finger region" description="C2H2-type 9" evidence="1">
    <location>
        <begin position="424"/>
        <end position="446"/>
    </location>
</feature>
<feature type="zinc finger region" description="C2H2-type 10" evidence="1">
    <location>
        <begin position="452"/>
        <end position="474"/>
    </location>
</feature>
<feature type="region of interest" description="Disordered" evidence="3">
    <location>
        <begin position="129"/>
        <end position="170"/>
    </location>
</feature>
<feature type="region of interest" description="Disordered" evidence="3">
    <location>
        <begin position="472"/>
        <end position="492"/>
    </location>
</feature>
<feature type="compositionally biased region" description="Basic and acidic residues" evidence="3">
    <location>
        <begin position="139"/>
        <end position="168"/>
    </location>
</feature>
<feature type="compositionally biased region" description="Basic and acidic residues" evidence="3">
    <location>
        <begin position="474"/>
        <end position="486"/>
    </location>
</feature>
<feature type="sequence variant" id="VAR_057425" description="In dbSNP:rs2976649.">
    <original>P</original>
    <variation>L</variation>
    <location>
        <position position="6"/>
    </location>
</feature>
<feature type="sequence conflict" description="In Ref. 1; BAD18586." evidence="4" ref="1">
    <original>I</original>
    <variation>V</variation>
    <location>
        <position position="198"/>
    </location>
</feature>
<feature type="sequence conflict" description="In Ref. 1; BAD18586." evidence="4" ref="1">
    <original>V</original>
    <variation>A</variation>
    <location>
        <position position="349"/>
    </location>
</feature>
<gene>
    <name type="primary">ZNF517</name>
</gene>
<organism>
    <name type="scientific">Homo sapiens</name>
    <name type="common">Human</name>
    <dbReference type="NCBI Taxonomy" id="9606"/>
    <lineage>
        <taxon>Eukaryota</taxon>
        <taxon>Metazoa</taxon>
        <taxon>Chordata</taxon>
        <taxon>Craniata</taxon>
        <taxon>Vertebrata</taxon>
        <taxon>Euteleostomi</taxon>
        <taxon>Mammalia</taxon>
        <taxon>Eutheria</taxon>
        <taxon>Euarchontoglires</taxon>
        <taxon>Primates</taxon>
        <taxon>Haplorrhini</taxon>
        <taxon>Catarrhini</taxon>
        <taxon>Hominidae</taxon>
        <taxon>Homo</taxon>
    </lineage>
</organism>
<sequence>MAMALPMPGPQEAVVFEDVAVYFTRIEWSCLAPDQQALYRDVMLENYGNLASLGFLVAKPALISLLEQGEEPGALILQVAEQSVAKASLCTDSRMEAGIMESPLQRKLSRQAGLPGTVWGCLPWGHPVGGHPAPPHPHGGPEDGSDKPTHPRAREHSASPRVLQEDLGRPVGSSAPRYRCVCGKAFRYNSLLLRHQIIHTGAKPFQCTECGKAFKQSSILLRHQLIHTEEKPFQCGECGKAFRQSTQLAAHHRVHTRERPYACGECGKAFSRSSRLLQHQKFHTGEKPFACTECGKAFCRRFTLNEHGRIHSGERPYRCLRCGQRFIRGSSLLKHHRLHAQEGAQDGGVGQGALLGAAQRPQAGDPPHECPVCGRPFRHNSLLLLHLRLHTGEKPFECAECGKAFGRKSNLTLHQKIHTKEKPFACTECGKAFRRSYTLNEHYRLHSGERPYRCRACGRACSRLSTLIQHQKVHGREPGEDTEGRRAPCWAS</sequence>
<evidence type="ECO:0000255" key="1">
    <source>
        <dbReference type="PROSITE-ProRule" id="PRU00042"/>
    </source>
</evidence>
<evidence type="ECO:0000255" key="2">
    <source>
        <dbReference type="PROSITE-ProRule" id="PRU00119"/>
    </source>
</evidence>
<evidence type="ECO:0000256" key="3">
    <source>
        <dbReference type="SAM" id="MobiDB-lite"/>
    </source>
</evidence>
<evidence type="ECO:0000305" key="4"/>
<proteinExistence type="evidence at protein level"/>
<protein>
    <recommendedName>
        <fullName>Zinc finger protein 517</fullName>
    </recommendedName>
</protein>